<dbReference type="EMBL" id="CP001177">
    <property type="protein sequence ID" value="ACJ77152.1"/>
    <property type="molecule type" value="Genomic_DNA"/>
</dbReference>
<dbReference type="SMR" id="B7HU73"/>
<dbReference type="KEGG" id="bcr:BCAH187_A0594"/>
<dbReference type="HOGENOM" id="CLU_143991_0_0_9"/>
<dbReference type="Proteomes" id="UP000002214">
    <property type="component" value="Chromosome"/>
</dbReference>
<dbReference type="GO" id="GO:0005886">
    <property type="term" value="C:plasma membrane"/>
    <property type="evidence" value="ECO:0007669"/>
    <property type="project" value="UniProtKB-SubCell"/>
</dbReference>
<dbReference type="HAMAP" id="MF_01502">
    <property type="entry name" value="UPF0295"/>
    <property type="match status" value="1"/>
</dbReference>
<dbReference type="InterPro" id="IPR020912">
    <property type="entry name" value="UPF0295"/>
</dbReference>
<dbReference type="NCBIfam" id="NF002796">
    <property type="entry name" value="PRK02935.1"/>
    <property type="match status" value="1"/>
</dbReference>
<dbReference type="Pfam" id="PF11023">
    <property type="entry name" value="DUF2614"/>
    <property type="match status" value="1"/>
</dbReference>
<proteinExistence type="inferred from homology"/>
<feature type="chain" id="PRO_1000198206" description="UPF0295 protein BCAH187_A0594">
    <location>
        <begin position="1"/>
        <end position="118"/>
    </location>
</feature>
<feature type="transmembrane region" description="Helical" evidence="1">
    <location>
        <begin position="12"/>
        <end position="32"/>
    </location>
</feature>
<feature type="transmembrane region" description="Helical" evidence="1">
    <location>
        <begin position="43"/>
        <end position="63"/>
    </location>
</feature>
<sequence>MSIKYSNKINKIRTFALSLVFIGLFIAYLGVFFRENIIIMTTFMMVGFLAVIASTVVYFWIGMLSTKTVQIICPSCDKPTKMLGRVDACMHCNQPLTMDRNLEGKEFDEKYNKKSYKS</sequence>
<protein>
    <recommendedName>
        <fullName evidence="1">UPF0295 protein BCAH187_A0594</fullName>
    </recommendedName>
</protein>
<keyword id="KW-1003">Cell membrane</keyword>
<keyword id="KW-0472">Membrane</keyword>
<keyword id="KW-0812">Transmembrane</keyword>
<keyword id="KW-1133">Transmembrane helix</keyword>
<organism>
    <name type="scientific">Bacillus cereus (strain AH187)</name>
    <dbReference type="NCBI Taxonomy" id="405534"/>
    <lineage>
        <taxon>Bacteria</taxon>
        <taxon>Bacillati</taxon>
        <taxon>Bacillota</taxon>
        <taxon>Bacilli</taxon>
        <taxon>Bacillales</taxon>
        <taxon>Bacillaceae</taxon>
        <taxon>Bacillus</taxon>
        <taxon>Bacillus cereus group</taxon>
    </lineage>
</organism>
<accession>B7HU73</accession>
<name>Y594_BACC7</name>
<evidence type="ECO:0000255" key="1">
    <source>
        <dbReference type="HAMAP-Rule" id="MF_01502"/>
    </source>
</evidence>
<comment type="subcellular location">
    <subcellularLocation>
        <location evidence="1">Cell membrane</location>
        <topology evidence="1">Multi-pass membrane protein</topology>
    </subcellularLocation>
</comment>
<comment type="similarity">
    <text evidence="1">Belongs to the UPF0295 family.</text>
</comment>
<reference key="1">
    <citation type="submission" date="2008-10" db="EMBL/GenBank/DDBJ databases">
        <title>Genome sequence of Bacillus cereus AH187.</title>
        <authorList>
            <person name="Dodson R.J."/>
            <person name="Durkin A.S."/>
            <person name="Rosovitz M.J."/>
            <person name="Rasko D.A."/>
            <person name="Kolsto A.B."/>
            <person name="Okstad O.A."/>
            <person name="Ravel J."/>
            <person name="Sutton G."/>
        </authorList>
    </citation>
    <scope>NUCLEOTIDE SEQUENCE [LARGE SCALE GENOMIC DNA]</scope>
    <source>
        <strain>AH187</strain>
    </source>
</reference>
<gene>
    <name type="ordered locus">BCAH187_A0594</name>
</gene>